<evidence type="ECO:0000255" key="1">
    <source>
        <dbReference type="HAMAP-Rule" id="MF_00808"/>
    </source>
</evidence>
<evidence type="ECO:0000305" key="2"/>
<comment type="function">
    <text evidence="1">Found at the monomer-monomer interface of the photosystem II (PS II) dimer, plays a role in assembly and dimerization of PSII. PSII is a light-driven water plastoquinone oxidoreductase, using light energy to abstract electrons from H(2)O, generating a proton gradient subsequently used for ATP formation.</text>
</comment>
<comment type="subunit">
    <text evidence="1">PSII is composed of 1 copy each of membrane proteins PsbA, PsbB, PsbC, PsbD, PsbE, PsbF, PsbH, PsbI, PsbJ, PsbK, PsbL, PsbM, PsbT, PsbY, PsbZ, Psb30/Ycf12, at least 3 peripheral proteins of the oxygen-evolving complex and a large number of cofactors. It forms dimeric complexes.</text>
</comment>
<comment type="subcellular location">
    <subcellularLocation>
        <location evidence="1">Plastid</location>
        <location evidence="1">Chloroplast thylakoid membrane</location>
        <topology evidence="1">Single-pass membrane protein</topology>
    </subcellularLocation>
</comment>
<comment type="similarity">
    <text evidence="1 2">Belongs to the PsbT family.</text>
</comment>
<dbReference type="EMBL" id="X07672">
    <property type="status" value="NOT_ANNOTATED_CDS"/>
    <property type="molecule type" value="Genomic_DNA"/>
</dbReference>
<dbReference type="PIR" id="JN0418">
    <property type="entry name" value="JN0418"/>
</dbReference>
<dbReference type="RefSeq" id="YP_008239196.1">
    <property type="nucleotide sequence ID" value="NC_021761.1"/>
</dbReference>
<dbReference type="SMR" id="P69676"/>
<dbReference type="GeneID" id="16792719"/>
<dbReference type="GO" id="GO:0009535">
    <property type="term" value="C:chloroplast thylakoid membrane"/>
    <property type="evidence" value="ECO:0007669"/>
    <property type="project" value="UniProtKB-SubCell"/>
</dbReference>
<dbReference type="GO" id="GO:0009539">
    <property type="term" value="C:photosystem II reaction center"/>
    <property type="evidence" value="ECO:0007669"/>
    <property type="project" value="InterPro"/>
</dbReference>
<dbReference type="GO" id="GO:0015979">
    <property type="term" value="P:photosynthesis"/>
    <property type="evidence" value="ECO:0007669"/>
    <property type="project" value="UniProtKB-UniRule"/>
</dbReference>
<dbReference type="HAMAP" id="MF_00808">
    <property type="entry name" value="PSII_PsbT"/>
    <property type="match status" value="1"/>
</dbReference>
<dbReference type="InterPro" id="IPR001743">
    <property type="entry name" value="PSII_PsbT"/>
</dbReference>
<dbReference type="InterPro" id="IPR037268">
    <property type="entry name" value="PSII_PsbT_sf"/>
</dbReference>
<dbReference type="PANTHER" id="PTHR36411">
    <property type="match status" value="1"/>
</dbReference>
<dbReference type="PANTHER" id="PTHR36411:SF2">
    <property type="entry name" value="PHOTOSYSTEM II REACTION CENTER PROTEIN T"/>
    <property type="match status" value="1"/>
</dbReference>
<dbReference type="Pfam" id="PF01405">
    <property type="entry name" value="PsbT"/>
    <property type="match status" value="1"/>
</dbReference>
<dbReference type="SUPFAM" id="SSF161029">
    <property type="entry name" value="Photosystem II reaction center protein T, PsbT"/>
    <property type="match status" value="1"/>
</dbReference>
<reference key="1">
    <citation type="journal article" date="1988" name="Nucleic Acids Res.">
        <title>Nucleotide sequence of rye chloroplast DNA fragment encoding psbB and psbH genes.</title>
        <authorList>
            <person name="Bukharov A.A."/>
            <person name="Kolosov V.L."/>
            <person name="Zolotarev A.S."/>
        </authorList>
    </citation>
    <scope>NUCLEOTIDE SEQUENCE [GENOMIC DNA]</scope>
</reference>
<reference key="2">
    <citation type="journal article" date="1989" name="Bioorg. Khim.">
        <title>Photosystem II of rye. Nucleotide sequence of psbB and psbH genes, coding 47-kDa of chlorophyll(a)-binding and 10-kDa phosphorylated subunits.</title>
        <authorList>
            <person name="Bukharov A.A."/>
            <person name="Kolosov V.L."/>
            <person name="Zolotarev A.S."/>
            <person name="Abdulaev N.G."/>
        </authorList>
    </citation>
    <scope>NUCLEOTIDE SEQUENCE [GENOMIC DNA]</scope>
</reference>
<organism>
    <name type="scientific">Secale cereale</name>
    <name type="common">Rye</name>
    <dbReference type="NCBI Taxonomy" id="4550"/>
    <lineage>
        <taxon>Eukaryota</taxon>
        <taxon>Viridiplantae</taxon>
        <taxon>Streptophyta</taxon>
        <taxon>Embryophyta</taxon>
        <taxon>Tracheophyta</taxon>
        <taxon>Spermatophyta</taxon>
        <taxon>Magnoliopsida</taxon>
        <taxon>Liliopsida</taxon>
        <taxon>Poales</taxon>
        <taxon>Poaceae</taxon>
        <taxon>BOP clade</taxon>
        <taxon>Pooideae</taxon>
        <taxon>Triticodae</taxon>
        <taxon>Triticeae</taxon>
        <taxon>Hordeinae</taxon>
        <taxon>Secale</taxon>
    </lineage>
</organism>
<sequence>MEALVYTFLLVSTLGIIFFAIFFREPPKVPPTPTKRIK</sequence>
<protein>
    <recommendedName>
        <fullName evidence="1">Photosystem II reaction center protein T</fullName>
        <shortName evidence="1">PSII-T</shortName>
    </recommendedName>
</protein>
<feature type="chain" id="PRO_0000217981" description="Photosystem II reaction center protein T">
    <location>
        <begin position="1"/>
        <end position="38"/>
    </location>
</feature>
<feature type="transmembrane region" description="Helical" evidence="1">
    <location>
        <begin position="3"/>
        <end position="23"/>
    </location>
</feature>
<proteinExistence type="inferred from homology"/>
<keyword id="KW-0150">Chloroplast</keyword>
<keyword id="KW-0472">Membrane</keyword>
<keyword id="KW-0602">Photosynthesis</keyword>
<keyword id="KW-0604">Photosystem II</keyword>
<keyword id="KW-0934">Plastid</keyword>
<keyword id="KW-0793">Thylakoid</keyword>
<keyword id="KW-0812">Transmembrane</keyword>
<keyword id="KW-1133">Transmembrane helix</keyword>
<gene>
    <name evidence="1" type="primary">psbT</name>
    <name type="synonym">ycf8</name>
</gene>
<geneLocation type="chloroplast"/>
<accession>P69676</accession>
<accession>P37260</accession>
<name>PSBT_SECCE</name>